<organism>
    <name type="scientific">Bothrops pauloensis</name>
    <name type="common">Neuwied's lancehead</name>
    <name type="synonym">Bothrops neuwiedi pauloensis</name>
    <dbReference type="NCBI Taxonomy" id="1042543"/>
    <lineage>
        <taxon>Eukaryota</taxon>
        <taxon>Metazoa</taxon>
        <taxon>Chordata</taxon>
        <taxon>Craniata</taxon>
        <taxon>Vertebrata</taxon>
        <taxon>Euteleostomi</taxon>
        <taxon>Lepidosauria</taxon>
        <taxon>Squamata</taxon>
        <taxon>Bifurcata</taxon>
        <taxon>Unidentata</taxon>
        <taxon>Episquamata</taxon>
        <taxon>Toxicofera</taxon>
        <taxon>Serpentes</taxon>
        <taxon>Colubroidea</taxon>
        <taxon>Viperidae</taxon>
        <taxon>Crotalinae</taxon>
        <taxon>Bothrops</taxon>
    </lineage>
</organism>
<name>VSP1_BOTPA</name>
<proteinExistence type="evidence at protein level"/>
<feature type="chain" id="PRO_0000416021" description="Thrombin-like enzyme BpSP-1">
    <location>
        <begin position="1"/>
        <end position="15" status="greater than"/>
    </location>
</feature>
<feature type="domain" description="Peptidase S1" evidence="2">
    <location>
        <begin position="1"/>
        <end position="15" status="greater than"/>
    </location>
</feature>
<feature type="disulfide bond" evidence="2">
    <location>
        <begin position="7"/>
        <end status="unknown"/>
    </location>
</feature>
<feature type="non-terminal residue">
    <location>
        <position position="15"/>
    </location>
</feature>
<accession>P0DJF1</accession>
<comment type="function">
    <text>Thrombin-like enzyme that has high clotting activity upon bovine and human plasma. Also has fibrinogenoltic activity by rapidly hydrolyzing Aalpha chain of fibrinogen (FGA), and partially consumes Bbeta chain (FGB). Has high catalytic activity upon substrates such as TAME, and specific substrates for thrombin S-2238 and S-2288. Also hydrolyzes specific substrates for kallikrein (S-2266 and S-2302), however, no release of kinin upon plasma has been determined. When administered intraperitoneally in mice, causes defibrinogenation, making the plasma incoagulable.</text>
</comment>
<comment type="activity regulation">
    <text evidence="3">Inhibited PMSF, benzamidine, leupeptin, and Cu(2+).</text>
</comment>
<comment type="subunit">
    <text evidence="1">Monomer.</text>
</comment>
<comment type="subcellular location">
    <subcellularLocation>
        <location>Secreted</location>
    </subcellularLocation>
</comment>
<comment type="tissue specificity">
    <text>Expressed by the venom gland.</text>
</comment>
<comment type="PTM">
    <text evidence="3">N-glycosylated. Contains sialic acid residues.</text>
</comment>
<comment type="miscellaneous">
    <text evidence="4">Negative results: does not act on the gamma chain of fibrinogen. Does not act upon factor Xa (F10) and plasmin substrates. Does not induce hemorrhage, myotoxicity or edema (PubMed:19539638).</text>
</comment>
<comment type="similarity">
    <text evidence="2">Belongs to the peptidase S1 family. Snake venom subfamily.</text>
</comment>
<keyword id="KW-1204">Blood coagulation cascade activating toxin</keyword>
<keyword id="KW-0903">Direct protein sequencing</keyword>
<keyword id="KW-1015">Disulfide bond</keyword>
<keyword id="KW-0325">Glycoprotein</keyword>
<keyword id="KW-1199">Hemostasis impairing toxin</keyword>
<keyword id="KW-0378">Hydrolase</keyword>
<keyword id="KW-0645">Protease</keyword>
<keyword id="KW-0964">Secreted</keyword>
<keyword id="KW-0720">Serine protease</keyword>
<keyword id="KW-0730">Sialic acid</keyword>
<keyword id="KW-0800">Toxin</keyword>
<protein>
    <recommendedName>
        <fullName>Thrombin-like enzyme BpSP-1</fullName>
        <shortName>SVTLE BpSP-1</shortName>
        <ecNumber>3.4.21.-</ecNumber>
    </recommendedName>
    <alternativeName>
        <fullName>Fibrinogen-clotting enzyme</fullName>
    </alternativeName>
    <alternativeName>
        <fullName>Snake venom serine protease</fullName>
        <shortName>SVSP</shortName>
    </alternativeName>
    <alternativeName>
        <fullName>Thrombin-like enzyme BpSP-I</fullName>
        <shortName>SVTLE BpSP-I</shortName>
    </alternativeName>
</protein>
<dbReference type="EC" id="3.4.21.-"/>
<dbReference type="GO" id="GO:0005576">
    <property type="term" value="C:extracellular region"/>
    <property type="evidence" value="ECO:0007669"/>
    <property type="project" value="UniProtKB-SubCell"/>
</dbReference>
<dbReference type="GO" id="GO:0008236">
    <property type="term" value="F:serine-type peptidase activity"/>
    <property type="evidence" value="ECO:0007669"/>
    <property type="project" value="UniProtKB-KW"/>
</dbReference>
<dbReference type="GO" id="GO:0090729">
    <property type="term" value="F:toxin activity"/>
    <property type="evidence" value="ECO:0007669"/>
    <property type="project" value="UniProtKB-KW"/>
</dbReference>
<dbReference type="GO" id="GO:0006508">
    <property type="term" value="P:proteolysis"/>
    <property type="evidence" value="ECO:0007669"/>
    <property type="project" value="UniProtKB-KW"/>
</dbReference>
<evidence type="ECO:0000250" key="1"/>
<evidence type="ECO:0000255" key="2">
    <source>
        <dbReference type="PROSITE-ProRule" id="PRU00274"/>
    </source>
</evidence>
<evidence type="ECO:0000269" key="3">
    <source>
    </source>
</evidence>
<evidence type="ECO:0000305" key="4">
    <source>
    </source>
</evidence>
<reference key="1">
    <citation type="journal article" date="2009" name="Toxicon">
        <title>Biochemical and functional properties of a thrombin-like enzyme isolated from Bothrops pauloensis snake venom.</title>
        <authorList>
            <person name="Costa F.L."/>
            <person name="Rodrigues R.S."/>
            <person name="Izidoro L.F."/>
            <person name="Menaldo D.L."/>
            <person name="Hamaguchi A."/>
            <person name="Homsi-Brandeburgo M.I."/>
            <person name="Fuly A.L."/>
            <person name="Soares S.G."/>
            <person name="Selistre-de-Araujo H.S."/>
            <person name="Barraviera B."/>
            <person name="Soares A.M."/>
            <person name="Rodrigues V.M."/>
        </authorList>
    </citation>
    <scope>PROTEIN SEQUENCE</scope>
    <scope>ACTIVITY REGULATION</scope>
    <scope>GLYCOSYLATION</scope>
    <scope>SIALIC ACID</scope>
    <source>
        <tissue>Venom</tissue>
    </source>
</reference>
<sequence>VIGGDECDINEHPFL</sequence>